<name>FABZ_NITSB</name>
<keyword id="KW-0963">Cytoplasm</keyword>
<keyword id="KW-0441">Lipid A biosynthesis</keyword>
<keyword id="KW-0444">Lipid biosynthesis</keyword>
<keyword id="KW-0443">Lipid metabolism</keyword>
<keyword id="KW-0456">Lyase</keyword>
<keyword id="KW-1185">Reference proteome</keyword>
<dbReference type="EC" id="4.2.1.59" evidence="1"/>
<dbReference type="EMBL" id="AP009178">
    <property type="protein sequence ID" value="BAF69654.1"/>
    <property type="molecule type" value="Genomic_DNA"/>
</dbReference>
<dbReference type="RefSeq" id="WP_012081917.1">
    <property type="nucleotide sequence ID" value="NC_009662.1"/>
</dbReference>
<dbReference type="SMR" id="A6Q2E5"/>
<dbReference type="FunCoup" id="A6Q2E5">
    <property type="interactions" value="388"/>
</dbReference>
<dbReference type="STRING" id="387092.NIS_0540"/>
<dbReference type="KEGG" id="nis:NIS_0540"/>
<dbReference type="eggNOG" id="COG0764">
    <property type="taxonomic scope" value="Bacteria"/>
</dbReference>
<dbReference type="HOGENOM" id="CLU_078912_1_2_7"/>
<dbReference type="InParanoid" id="A6Q2E5"/>
<dbReference type="OrthoDB" id="9772788at2"/>
<dbReference type="Proteomes" id="UP000001118">
    <property type="component" value="Chromosome"/>
</dbReference>
<dbReference type="GO" id="GO:0005737">
    <property type="term" value="C:cytoplasm"/>
    <property type="evidence" value="ECO:0007669"/>
    <property type="project" value="UniProtKB-SubCell"/>
</dbReference>
<dbReference type="GO" id="GO:0016020">
    <property type="term" value="C:membrane"/>
    <property type="evidence" value="ECO:0007669"/>
    <property type="project" value="GOC"/>
</dbReference>
<dbReference type="GO" id="GO:0019171">
    <property type="term" value="F:(3R)-hydroxyacyl-[acyl-carrier-protein] dehydratase activity"/>
    <property type="evidence" value="ECO:0007669"/>
    <property type="project" value="UniProtKB-EC"/>
</dbReference>
<dbReference type="GO" id="GO:0006633">
    <property type="term" value="P:fatty acid biosynthetic process"/>
    <property type="evidence" value="ECO:0007669"/>
    <property type="project" value="UniProtKB-UniRule"/>
</dbReference>
<dbReference type="GO" id="GO:0009245">
    <property type="term" value="P:lipid A biosynthetic process"/>
    <property type="evidence" value="ECO:0007669"/>
    <property type="project" value="UniProtKB-UniRule"/>
</dbReference>
<dbReference type="CDD" id="cd01288">
    <property type="entry name" value="FabZ"/>
    <property type="match status" value="1"/>
</dbReference>
<dbReference type="FunFam" id="3.10.129.10:FF:000001">
    <property type="entry name" value="3-hydroxyacyl-[acyl-carrier-protein] dehydratase FabZ"/>
    <property type="match status" value="1"/>
</dbReference>
<dbReference type="Gene3D" id="3.10.129.10">
    <property type="entry name" value="Hotdog Thioesterase"/>
    <property type="match status" value="1"/>
</dbReference>
<dbReference type="HAMAP" id="MF_00406">
    <property type="entry name" value="FabZ"/>
    <property type="match status" value="1"/>
</dbReference>
<dbReference type="InterPro" id="IPR013114">
    <property type="entry name" value="FabA_FabZ"/>
</dbReference>
<dbReference type="InterPro" id="IPR010084">
    <property type="entry name" value="FabZ"/>
</dbReference>
<dbReference type="InterPro" id="IPR029069">
    <property type="entry name" value="HotDog_dom_sf"/>
</dbReference>
<dbReference type="NCBIfam" id="TIGR01750">
    <property type="entry name" value="fabZ"/>
    <property type="match status" value="1"/>
</dbReference>
<dbReference type="NCBIfam" id="NF000582">
    <property type="entry name" value="PRK00006.1"/>
    <property type="match status" value="1"/>
</dbReference>
<dbReference type="PANTHER" id="PTHR30272">
    <property type="entry name" value="3-HYDROXYACYL-[ACYL-CARRIER-PROTEIN] DEHYDRATASE"/>
    <property type="match status" value="1"/>
</dbReference>
<dbReference type="PANTHER" id="PTHR30272:SF1">
    <property type="entry name" value="3-HYDROXYACYL-[ACYL-CARRIER-PROTEIN] DEHYDRATASE"/>
    <property type="match status" value="1"/>
</dbReference>
<dbReference type="Pfam" id="PF07977">
    <property type="entry name" value="FabA"/>
    <property type="match status" value="1"/>
</dbReference>
<dbReference type="SUPFAM" id="SSF54637">
    <property type="entry name" value="Thioesterase/thiol ester dehydrase-isomerase"/>
    <property type="match status" value="1"/>
</dbReference>
<evidence type="ECO:0000255" key="1">
    <source>
        <dbReference type="HAMAP-Rule" id="MF_00406"/>
    </source>
</evidence>
<feature type="chain" id="PRO_1000049850" description="3-hydroxyacyl-[acyl-carrier-protein] dehydratase FabZ">
    <location>
        <begin position="1"/>
        <end position="148"/>
    </location>
</feature>
<feature type="active site" evidence="1">
    <location>
        <position position="48"/>
    </location>
</feature>
<accession>A6Q2E5</accession>
<gene>
    <name evidence="1" type="primary">fabZ</name>
    <name type="ordered locus">NIS_0540</name>
</gene>
<protein>
    <recommendedName>
        <fullName evidence="1">3-hydroxyacyl-[acyl-carrier-protein] dehydratase FabZ</fullName>
        <ecNumber evidence="1">4.2.1.59</ecNumber>
    </recommendedName>
    <alternativeName>
        <fullName evidence="1">(3R)-hydroxymyristoyl-[acyl-carrier-protein] dehydratase</fullName>
        <shortName evidence="1">(3R)-hydroxymyristoyl-ACP dehydrase</shortName>
    </alternativeName>
    <alternativeName>
        <fullName evidence="1">Beta-hydroxyacyl-ACP dehydratase</fullName>
    </alternativeName>
</protein>
<proteinExistence type="inferred from homology"/>
<sequence>MLDVVEIQKILPHRYPFLLVDRVVELEKGKSVKAYKNVSISEPVFEGHFPGHPIYPGVMIIEGMAQAGGVLAFLSSSEEEQEAAKDKVVYFMSIDKAKFRNPVRPGDKLEYHLEVIKHRGSIWVLDGKAYVDGNLVAEAELKAMIVDK</sequence>
<reference key="1">
    <citation type="journal article" date="2007" name="Proc. Natl. Acad. Sci. U.S.A.">
        <title>Deep-sea vent epsilon-proteobacterial genomes provide insights into emergence of pathogens.</title>
        <authorList>
            <person name="Nakagawa S."/>
            <person name="Takaki Y."/>
            <person name="Shimamura S."/>
            <person name="Reysenbach A.-L."/>
            <person name="Takai K."/>
            <person name="Horikoshi K."/>
        </authorList>
    </citation>
    <scope>NUCLEOTIDE SEQUENCE [LARGE SCALE GENOMIC DNA]</scope>
    <source>
        <strain>SB155-2</strain>
    </source>
</reference>
<comment type="function">
    <text evidence="1">Involved in unsaturated fatty acids biosynthesis. Catalyzes the dehydration of short chain beta-hydroxyacyl-ACPs and long chain saturated and unsaturated beta-hydroxyacyl-ACPs.</text>
</comment>
<comment type="catalytic activity">
    <reaction evidence="1">
        <text>a (3R)-hydroxyacyl-[ACP] = a (2E)-enoyl-[ACP] + H2O</text>
        <dbReference type="Rhea" id="RHEA:13097"/>
        <dbReference type="Rhea" id="RHEA-COMP:9925"/>
        <dbReference type="Rhea" id="RHEA-COMP:9945"/>
        <dbReference type="ChEBI" id="CHEBI:15377"/>
        <dbReference type="ChEBI" id="CHEBI:78784"/>
        <dbReference type="ChEBI" id="CHEBI:78827"/>
        <dbReference type="EC" id="4.2.1.59"/>
    </reaction>
</comment>
<comment type="subcellular location">
    <subcellularLocation>
        <location evidence="1">Cytoplasm</location>
    </subcellularLocation>
</comment>
<comment type="similarity">
    <text evidence="1">Belongs to the thioester dehydratase family. FabZ subfamily.</text>
</comment>
<organism>
    <name type="scientific">Nitratiruptor sp. (strain SB155-2)</name>
    <dbReference type="NCBI Taxonomy" id="387092"/>
    <lineage>
        <taxon>Bacteria</taxon>
        <taxon>Pseudomonadati</taxon>
        <taxon>Campylobacterota</taxon>
        <taxon>Epsilonproteobacteria</taxon>
        <taxon>Nautiliales</taxon>
        <taxon>Nitratiruptoraceae</taxon>
        <taxon>Nitratiruptor</taxon>
    </lineage>
</organism>